<accession>C0M683</accession>
<protein>
    <recommendedName>
        <fullName evidence="1">Protein translocase subunit SecA</fullName>
        <ecNumber evidence="1">7.4.2.8</ecNumber>
    </recommendedName>
</protein>
<sequence length="842" mass="95283">MSNILRKVIENDKGELRKLEKIAKKVESYADYMESLSDKDLQAKTPEFKQRYQNGETLEQLLPEAFAVVREAARRVLGLYPYRVQIMGGVVLHNGDVPEMRTGEGKTLTATMPVYLNALAGEGVHVITVNEYLSTRDATEMGEVYSWLGLSVGINLAAKSPAEKREAYLCDITYSTNSEVGFDYLRDNMVVRQEDMVQRPLNFALVDEVDSVLIDEARTPLIVSGAVSSETNQLYIRADMFVKTLDSVDYIIDVPTKTIGLSDSGIDKAESYFNLSNLYDIENVALTHFVDNALRANYIMLLDIDYVVSEEGEILIVDQFTGRTMEGRRFSDGLHQAIEAKEGVRIQEESKTSASITYQNMFRMYKKLAGMTGTAKTEEEEFREVYNMRIIPIPTNRPIARIDHTDLLYATLNSKFKAVVADVKARYEKGQPVLVGTVAVETSDLISKKLVEAGIPHEVLNAKNHFKEAQIIMNAGQRGAVTIATNMAGRGTDIKLGEGVRELGGLCVIGTERHESRRIDNQLRGRSGRQGDPGESQFYLSLEDELMRRFGTDRIKAFLDRMNNDDEDIVIKSRMLSRQVESAQKRVEGNNYDTRKQVLQYDDVMREQREIIYANRRDVITANRDLGPEIKAMIKRTIDRAVDAHSRTNRKDAIDAIVTFARTSIVPEETIGAKELRGLKDDQIKDKLYQRALEIYDKQLSKLRDQDAILEFQKVLILMIVDNKWTEHIDALDQLRNAVGLRGYAQNNPVVEYQSEGFKMFQDMIGAIEFDVTRTMMKAQIHEQERERAIQYATTTAAQNIQSQAIGADFDSSADFSRVERNDACPCHSGKKFKNCHGRKAF</sequence>
<feature type="chain" id="PRO_1000184245" description="Protein translocase subunit SecA">
    <location>
        <begin position="1"/>
        <end position="842"/>
    </location>
</feature>
<feature type="binding site" evidence="1">
    <location>
        <position position="85"/>
    </location>
    <ligand>
        <name>ATP</name>
        <dbReference type="ChEBI" id="CHEBI:30616"/>
    </ligand>
</feature>
<feature type="binding site" evidence="1">
    <location>
        <begin position="103"/>
        <end position="107"/>
    </location>
    <ligand>
        <name>ATP</name>
        <dbReference type="ChEBI" id="CHEBI:30616"/>
    </ligand>
</feature>
<feature type="binding site" evidence="1">
    <location>
        <position position="493"/>
    </location>
    <ligand>
        <name>ATP</name>
        <dbReference type="ChEBI" id="CHEBI:30616"/>
    </ligand>
</feature>
<feature type="binding site" evidence="1">
    <location>
        <position position="825"/>
    </location>
    <ligand>
        <name>Zn(2+)</name>
        <dbReference type="ChEBI" id="CHEBI:29105"/>
    </ligand>
</feature>
<feature type="binding site" evidence="1">
    <location>
        <position position="827"/>
    </location>
    <ligand>
        <name>Zn(2+)</name>
        <dbReference type="ChEBI" id="CHEBI:29105"/>
    </ligand>
</feature>
<feature type="binding site" evidence="1">
    <location>
        <position position="836"/>
    </location>
    <ligand>
        <name>Zn(2+)</name>
        <dbReference type="ChEBI" id="CHEBI:29105"/>
    </ligand>
</feature>
<feature type="binding site" evidence="1">
    <location>
        <position position="837"/>
    </location>
    <ligand>
        <name>Zn(2+)</name>
        <dbReference type="ChEBI" id="CHEBI:29105"/>
    </ligand>
</feature>
<evidence type="ECO:0000255" key="1">
    <source>
        <dbReference type="HAMAP-Rule" id="MF_01382"/>
    </source>
</evidence>
<dbReference type="EC" id="7.4.2.8" evidence="1"/>
<dbReference type="EMBL" id="FM204883">
    <property type="protein sequence ID" value="CAW92607.1"/>
    <property type="molecule type" value="Genomic_DNA"/>
</dbReference>
<dbReference type="RefSeq" id="WP_012679046.1">
    <property type="nucleotide sequence ID" value="NC_012471.1"/>
</dbReference>
<dbReference type="SMR" id="C0M683"/>
<dbReference type="KEGG" id="seu:SEQ_0435"/>
<dbReference type="HOGENOM" id="CLU_005314_3_0_9"/>
<dbReference type="OrthoDB" id="9805579at2"/>
<dbReference type="Proteomes" id="UP000001365">
    <property type="component" value="Chromosome"/>
</dbReference>
<dbReference type="GO" id="GO:0031522">
    <property type="term" value="C:cell envelope Sec protein transport complex"/>
    <property type="evidence" value="ECO:0007669"/>
    <property type="project" value="TreeGrafter"/>
</dbReference>
<dbReference type="GO" id="GO:0005829">
    <property type="term" value="C:cytosol"/>
    <property type="evidence" value="ECO:0007669"/>
    <property type="project" value="TreeGrafter"/>
</dbReference>
<dbReference type="GO" id="GO:0005886">
    <property type="term" value="C:plasma membrane"/>
    <property type="evidence" value="ECO:0007669"/>
    <property type="project" value="UniProtKB-SubCell"/>
</dbReference>
<dbReference type="GO" id="GO:0005524">
    <property type="term" value="F:ATP binding"/>
    <property type="evidence" value="ECO:0007669"/>
    <property type="project" value="UniProtKB-UniRule"/>
</dbReference>
<dbReference type="GO" id="GO:0046872">
    <property type="term" value="F:metal ion binding"/>
    <property type="evidence" value="ECO:0007669"/>
    <property type="project" value="UniProtKB-KW"/>
</dbReference>
<dbReference type="GO" id="GO:0008564">
    <property type="term" value="F:protein-exporting ATPase activity"/>
    <property type="evidence" value="ECO:0007669"/>
    <property type="project" value="UniProtKB-EC"/>
</dbReference>
<dbReference type="GO" id="GO:0065002">
    <property type="term" value="P:intracellular protein transmembrane transport"/>
    <property type="evidence" value="ECO:0007669"/>
    <property type="project" value="UniProtKB-UniRule"/>
</dbReference>
<dbReference type="GO" id="GO:0017038">
    <property type="term" value="P:protein import"/>
    <property type="evidence" value="ECO:0007669"/>
    <property type="project" value="InterPro"/>
</dbReference>
<dbReference type="GO" id="GO:0006605">
    <property type="term" value="P:protein targeting"/>
    <property type="evidence" value="ECO:0007669"/>
    <property type="project" value="UniProtKB-UniRule"/>
</dbReference>
<dbReference type="GO" id="GO:0043952">
    <property type="term" value="P:protein transport by the Sec complex"/>
    <property type="evidence" value="ECO:0007669"/>
    <property type="project" value="TreeGrafter"/>
</dbReference>
<dbReference type="CDD" id="cd17928">
    <property type="entry name" value="DEXDc_SecA"/>
    <property type="match status" value="1"/>
</dbReference>
<dbReference type="CDD" id="cd18803">
    <property type="entry name" value="SF2_C_secA"/>
    <property type="match status" value="1"/>
</dbReference>
<dbReference type="FunFam" id="1.10.3060.10:FF:000002">
    <property type="entry name" value="Preprotein translocase subunit SecA"/>
    <property type="match status" value="1"/>
</dbReference>
<dbReference type="FunFam" id="3.40.50.300:FF:000429">
    <property type="entry name" value="Preprotein translocase subunit SecA"/>
    <property type="match status" value="1"/>
</dbReference>
<dbReference type="FunFam" id="3.90.1440.10:FF:000001">
    <property type="entry name" value="Preprotein translocase subunit SecA"/>
    <property type="match status" value="1"/>
</dbReference>
<dbReference type="Gene3D" id="1.10.3060.10">
    <property type="entry name" value="Helical scaffold and wing domains of SecA"/>
    <property type="match status" value="1"/>
</dbReference>
<dbReference type="Gene3D" id="3.40.50.300">
    <property type="entry name" value="P-loop containing nucleotide triphosphate hydrolases"/>
    <property type="match status" value="3"/>
</dbReference>
<dbReference type="Gene3D" id="3.90.1440.10">
    <property type="entry name" value="SecA, preprotein cross-linking domain"/>
    <property type="match status" value="1"/>
</dbReference>
<dbReference type="HAMAP" id="MF_01382">
    <property type="entry name" value="SecA"/>
    <property type="match status" value="1"/>
</dbReference>
<dbReference type="InterPro" id="IPR014001">
    <property type="entry name" value="Helicase_ATP-bd"/>
</dbReference>
<dbReference type="InterPro" id="IPR001650">
    <property type="entry name" value="Helicase_C-like"/>
</dbReference>
<dbReference type="InterPro" id="IPR027417">
    <property type="entry name" value="P-loop_NTPase"/>
</dbReference>
<dbReference type="InterPro" id="IPR004027">
    <property type="entry name" value="SEC_C_motif"/>
</dbReference>
<dbReference type="InterPro" id="IPR000185">
    <property type="entry name" value="SecA"/>
</dbReference>
<dbReference type="InterPro" id="IPR020937">
    <property type="entry name" value="SecA_CS"/>
</dbReference>
<dbReference type="InterPro" id="IPR011115">
    <property type="entry name" value="SecA_DEAD"/>
</dbReference>
<dbReference type="InterPro" id="IPR014018">
    <property type="entry name" value="SecA_motor_DEAD"/>
</dbReference>
<dbReference type="InterPro" id="IPR011130">
    <property type="entry name" value="SecA_preprotein_X-link_dom"/>
</dbReference>
<dbReference type="InterPro" id="IPR044722">
    <property type="entry name" value="SecA_SF2_C"/>
</dbReference>
<dbReference type="InterPro" id="IPR011116">
    <property type="entry name" value="SecA_Wing/Scaffold"/>
</dbReference>
<dbReference type="InterPro" id="IPR036266">
    <property type="entry name" value="SecA_Wing/Scaffold_sf"/>
</dbReference>
<dbReference type="InterPro" id="IPR036670">
    <property type="entry name" value="SecA_X-link_sf"/>
</dbReference>
<dbReference type="NCBIfam" id="NF006630">
    <property type="entry name" value="PRK09200.1"/>
    <property type="match status" value="1"/>
</dbReference>
<dbReference type="NCBIfam" id="TIGR00963">
    <property type="entry name" value="secA"/>
    <property type="match status" value="1"/>
</dbReference>
<dbReference type="PANTHER" id="PTHR30612:SF0">
    <property type="entry name" value="CHLOROPLAST PROTEIN-TRANSPORTING ATPASE"/>
    <property type="match status" value="1"/>
</dbReference>
<dbReference type="PANTHER" id="PTHR30612">
    <property type="entry name" value="SECA INNER MEMBRANE COMPONENT OF SEC PROTEIN SECRETION SYSTEM"/>
    <property type="match status" value="1"/>
</dbReference>
<dbReference type="Pfam" id="PF21090">
    <property type="entry name" value="P-loop_SecA"/>
    <property type="match status" value="1"/>
</dbReference>
<dbReference type="Pfam" id="PF02810">
    <property type="entry name" value="SEC-C"/>
    <property type="match status" value="1"/>
</dbReference>
<dbReference type="Pfam" id="PF07517">
    <property type="entry name" value="SecA_DEAD"/>
    <property type="match status" value="1"/>
</dbReference>
<dbReference type="Pfam" id="PF01043">
    <property type="entry name" value="SecA_PP_bind"/>
    <property type="match status" value="1"/>
</dbReference>
<dbReference type="Pfam" id="PF07516">
    <property type="entry name" value="SecA_SW"/>
    <property type="match status" value="1"/>
</dbReference>
<dbReference type="PRINTS" id="PR00906">
    <property type="entry name" value="SECA"/>
</dbReference>
<dbReference type="SMART" id="SM00957">
    <property type="entry name" value="SecA_DEAD"/>
    <property type="match status" value="1"/>
</dbReference>
<dbReference type="SMART" id="SM00958">
    <property type="entry name" value="SecA_PP_bind"/>
    <property type="match status" value="1"/>
</dbReference>
<dbReference type="SUPFAM" id="SSF81886">
    <property type="entry name" value="Helical scaffold and wing domains of SecA"/>
    <property type="match status" value="1"/>
</dbReference>
<dbReference type="SUPFAM" id="SSF52540">
    <property type="entry name" value="P-loop containing nucleoside triphosphate hydrolases"/>
    <property type="match status" value="2"/>
</dbReference>
<dbReference type="SUPFAM" id="SSF81767">
    <property type="entry name" value="Pre-protein crosslinking domain of SecA"/>
    <property type="match status" value="1"/>
</dbReference>
<dbReference type="PROSITE" id="PS01312">
    <property type="entry name" value="SECA"/>
    <property type="match status" value="1"/>
</dbReference>
<dbReference type="PROSITE" id="PS51196">
    <property type="entry name" value="SECA_MOTOR_DEAD"/>
    <property type="match status" value="1"/>
</dbReference>
<comment type="function">
    <text evidence="1">Part of the Sec protein translocase complex. Interacts with the SecYEG preprotein conducting channel. Has a central role in coupling the hydrolysis of ATP to the transfer of proteins into and across the cell membrane, serving as an ATP-driven molecular motor driving the stepwise translocation of polypeptide chains across the membrane.</text>
</comment>
<comment type="catalytic activity">
    <reaction evidence="1">
        <text>ATP + H2O + cellular proteinSide 1 = ADP + phosphate + cellular proteinSide 2.</text>
        <dbReference type="EC" id="7.4.2.8"/>
    </reaction>
</comment>
<comment type="cofactor">
    <cofactor evidence="1">
        <name>Zn(2+)</name>
        <dbReference type="ChEBI" id="CHEBI:29105"/>
    </cofactor>
    <text evidence="1">May bind 1 zinc ion per subunit.</text>
</comment>
<comment type="subunit">
    <text evidence="1">Monomer and homodimer. Part of the essential Sec protein translocation apparatus which comprises SecA, SecYEG and auxiliary proteins SecDF. Other proteins may also be involved.</text>
</comment>
<comment type="subcellular location">
    <subcellularLocation>
        <location evidence="1">Cell membrane</location>
        <topology evidence="1">Peripheral membrane protein</topology>
        <orientation evidence="1">Cytoplasmic side</orientation>
    </subcellularLocation>
    <subcellularLocation>
        <location evidence="1">Cytoplasm</location>
    </subcellularLocation>
    <text evidence="1">Distribution is 50-50.</text>
</comment>
<comment type="similarity">
    <text evidence="1">Belongs to the SecA family.</text>
</comment>
<organism>
    <name type="scientific">Streptococcus equi subsp. equi (strain 4047)</name>
    <dbReference type="NCBI Taxonomy" id="553482"/>
    <lineage>
        <taxon>Bacteria</taxon>
        <taxon>Bacillati</taxon>
        <taxon>Bacillota</taxon>
        <taxon>Bacilli</taxon>
        <taxon>Lactobacillales</taxon>
        <taxon>Streptococcaceae</taxon>
        <taxon>Streptococcus</taxon>
    </lineage>
</organism>
<name>SECA_STRE4</name>
<proteinExistence type="inferred from homology"/>
<gene>
    <name evidence="1" type="primary">secA</name>
    <name type="ordered locus">SEQ_0435</name>
</gene>
<keyword id="KW-0067">ATP-binding</keyword>
<keyword id="KW-1003">Cell membrane</keyword>
<keyword id="KW-0963">Cytoplasm</keyword>
<keyword id="KW-0472">Membrane</keyword>
<keyword id="KW-0479">Metal-binding</keyword>
<keyword id="KW-0547">Nucleotide-binding</keyword>
<keyword id="KW-0653">Protein transport</keyword>
<keyword id="KW-1278">Translocase</keyword>
<keyword id="KW-0811">Translocation</keyword>
<keyword id="KW-0813">Transport</keyword>
<keyword id="KW-0862">Zinc</keyword>
<reference key="1">
    <citation type="journal article" date="2009" name="PLoS Pathog.">
        <title>Genomic evidence for the evolution of Streptococcus equi: host restriction, increased virulence, and genetic exchange with human pathogens.</title>
        <authorList>
            <person name="Holden M.T.G."/>
            <person name="Heather Z."/>
            <person name="Paillot R."/>
            <person name="Steward K.F."/>
            <person name="Webb K."/>
            <person name="Ainslie F."/>
            <person name="Jourdan T."/>
            <person name="Bason N.C."/>
            <person name="Holroyd N.E."/>
            <person name="Mungall K."/>
            <person name="Quail M.A."/>
            <person name="Sanders M."/>
            <person name="Simmonds M."/>
            <person name="Willey D."/>
            <person name="Brooks K."/>
            <person name="Aanensen D.M."/>
            <person name="Spratt B.G."/>
            <person name="Jolley K.A."/>
            <person name="Maiden M.C.J."/>
            <person name="Kehoe M."/>
            <person name="Chanter N."/>
            <person name="Bentley S.D."/>
            <person name="Robinson C."/>
            <person name="Maskell D.J."/>
            <person name="Parkhill J."/>
            <person name="Waller A.S."/>
        </authorList>
    </citation>
    <scope>NUCLEOTIDE SEQUENCE [LARGE SCALE GENOMIC DNA]</scope>
    <source>
        <strain>4047</strain>
    </source>
</reference>